<protein>
    <recommendedName>
        <fullName evidence="24">ATP-binding cassette sub-family D member 1</fullName>
        <ecNumber evidence="2">3.1.2.-</ecNumber>
        <ecNumber evidence="2">7.6.2.-</ecNumber>
    </recommendedName>
    <alternativeName>
        <fullName evidence="2">Adrenoleukodystrophy protein</fullName>
        <shortName evidence="2">ALDP</shortName>
    </alternativeName>
</protein>
<feature type="chain" id="PRO_0000093305" description="ATP-binding cassette sub-family D member 1">
    <location>
        <begin position="1"/>
        <end position="736"/>
    </location>
</feature>
<feature type="transmembrane region" description="Helical" evidence="5">
    <location>
        <begin position="92"/>
        <end position="112"/>
    </location>
</feature>
<feature type="transmembrane region" description="Helical" evidence="5">
    <location>
        <begin position="131"/>
        <end position="151"/>
    </location>
</feature>
<feature type="transmembrane region" description="Helical" evidence="5">
    <location>
        <begin position="238"/>
        <end position="258"/>
    </location>
</feature>
<feature type="transmembrane region" description="Helical" evidence="5">
    <location>
        <begin position="338"/>
        <end position="358"/>
    </location>
</feature>
<feature type="transmembrane region" description="Helical" evidence="5">
    <location>
        <begin position="473"/>
        <end position="493"/>
    </location>
</feature>
<feature type="domain" description="ABC transmembrane type-1" evidence="5">
    <location>
        <begin position="94"/>
        <end position="386"/>
    </location>
</feature>
<feature type="domain" description="ABC transporter" evidence="4">
    <location>
        <begin position="474"/>
        <end position="729"/>
    </location>
</feature>
<feature type="region of interest" description="Interaction with PEX19" evidence="2">
    <location>
        <begin position="67"/>
        <end position="186"/>
    </location>
</feature>
<feature type="region of interest" description="PEX19 binding site and required for peroxisomal targeting" evidence="2">
    <location>
        <begin position="67"/>
        <end position="84"/>
    </location>
</feature>
<feature type="region of interest" description="Required for homodimerization" evidence="2">
    <location>
        <begin position="658"/>
        <end position="736"/>
    </location>
</feature>
<feature type="binding site" evidence="4">
    <location>
        <begin position="507"/>
        <end position="514"/>
    </location>
    <ligand>
        <name>ATP</name>
        <dbReference type="ChEBI" id="CHEBI:30616"/>
    </ligand>
</feature>
<feature type="glycosylation site" description="N-linked (GlcNAc...) asparagine" evidence="3">
    <location>
        <position position="214"/>
    </location>
</feature>
<gene>
    <name evidence="25" type="primary">Abcd1</name>
    <name evidence="22" type="synonym">Ald</name>
    <name evidence="23" type="synonym">Aldgh</name>
</gene>
<proteinExistence type="evidence at protein level"/>
<accession>P48410</accession>
<accession>Q9QY41</accession>
<accession>Q9QZ32</accession>
<name>ABCD1_MOUSE</name>
<dbReference type="EC" id="3.1.2.-" evidence="2"/>
<dbReference type="EC" id="7.6.2.-" evidence="2"/>
<dbReference type="EMBL" id="Z33637">
    <property type="protein sequence ID" value="CAA83917.1"/>
    <property type="molecule type" value="mRNA"/>
</dbReference>
<dbReference type="EMBL" id="AK088792">
    <property type="protein sequence ID" value="BAC40574.1"/>
    <property type="molecule type" value="mRNA"/>
</dbReference>
<dbReference type="EMBL" id="BC011273">
    <property type="protein sequence ID" value="AAH11273.1"/>
    <property type="molecule type" value="mRNA"/>
</dbReference>
<dbReference type="EMBL" id="BC079840">
    <property type="protein sequence ID" value="AAH79840.1"/>
    <property type="molecule type" value="mRNA"/>
</dbReference>
<dbReference type="EMBL" id="AJ009991">
    <property type="protein sequence ID" value="CAA08935.1"/>
    <property type="molecule type" value="Genomic_DNA"/>
</dbReference>
<dbReference type="EMBL" id="AF133093">
    <property type="status" value="NOT_ANNOTATED_CDS"/>
    <property type="molecule type" value="Genomic_DNA"/>
</dbReference>
<dbReference type="CCDS" id="CCDS30210.1"/>
<dbReference type="PIR" id="S47044">
    <property type="entry name" value="S47044"/>
</dbReference>
<dbReference type="RefSeq" id="NP_031461.1">
    <property type="nucleotide sequence ID" value="NM_007435.2"/>
</dbReference>
<dbReference type="SMR" id="P48410"/>
<dbReference type="BioGRID" id="198062">
    <property type="interactions" value="3"/>
</dbReference>
<dbReference type="FunCoup" id="P48410">
    <property type="interactions" value="1096"/>
</dbReference>
<dbReference type="IntAct" id="P48410">
    <property type="interactions" value="1"/>
</dbReference>
<dbReference type="STRING" id="10090.ENSMUSP00000002084"/>
<dbReference type="GlyCosmos" id="P48410">
    <property type="glycosylation" value="1 site, No reported glycans"/>
</dbReference>
<dbReference type="GlyGen" id="P48410">
    <property type="glycosylation" value="2 sites, 1 O-linked glycan (1 site)"/>
</dbReference>
<dbReference type="iPTMnet" id="P48410"/>
<dbReference type="PhosphoSitePlus" id="P48410"/>
<dbReference type="SwissPalm" id="P48410"/>
<dbReference type="jPOST" id="P48410"/>
<dbReference type="PaxDb" id="10090-ENSMUSP00000002084"/>
<dbReference type="PeptideAtlas" id="P48410"/>
<dbReference type="ProteomicsDB" id="285955"/>
<dbReference type="Pumba" id="P48410"/>
<dbReference type="Antibodypedia" id="30940">
    <property type="antibodies" value="443 antibodies from 34 providers"/>
</dbReference>
<dbReference type="DNASU" id="11666"/>
<dbReference type="Ensembl" id="ENSMUST00000002084.14">
    <property type="protein sequence ID" value="ENSMUSP00000002084.8"/>
    <property type="gene ID" value="ENSMUSG00000031378.15"/>
</dbReference>
<dbReference type="GeneID" id="11666"/>
<dbReference type="KEGG" id="mmu:11666"/>
<dbReference type="UCSC" id="uc009tml.1">
    <property type="organism name" value="mouse"/>
</dbReference>
<dbReference type="AGR" id="MGI:1349215"/>
<dbReference type="CTD" id="215"/>
<dbReference type="MGI" id="MGI:1349215">
    <property type="gene designation" value="Abcd1"/>
</dbReference>
<dbReference type="VEuPathDB" id="HostDB:ENSMUSG00000031378"/>
<dbReference type="eggNOG" id="KOG0064">
    <property type="taxonomic scope" value="Eukaryota"/>
</dbReference>
<dbReference type="GeneTree" id="ENSGT00950000182955"/>
<dbReference type="HOGENOM" id="CLU_007587_1_1_1"/>
<dbReference type="InParanoid" id="P48410"/>
<dbReference type="OMA" id="CHRTSLW"/>
<dbReference type="OrthoDB" id="422637at2759"/>
<dbReference type="PhylomeDB" id="P48410"/>
<dbReference type="TreeFam" id="TF105205"/>
<dbReference type="BRENDA" id="7.6.2.4">
    <property type="organism ID" value="3474"/>
</dbReference>
<dbReference type="Reactome" id="R-MMU-1369062">
    <property type="pathway name" value="ABC transporters in lipid homeostasis"/>
</dbReference>
<dbReference type="Reactome" id="R-MMU-2046105">
    <property type="pathway name" value="Linoleic acid (LA) metabolism"/>
</dbReference>
<dbReference type="Reactome" id="R-MMU-2046106">
    <property type="pathway name" value="alpha-linolenic acid (ALA) metabolism"/>
</dbReference>
<dbReference type="Reactome" id="R-MMU-390247">
    <property type="pathway name" value="Beta-oxidation of very long chain fatty acids"/>
</dbReference>
<dbReference type="Reactome" id="R-MMU-9603798">
    <property type="pathway name" value="Class I peroxisomal membrane protein import"/>
</dbReference>
<dbReference type="BioGRID-ORCS" id="11666">
    <property type="hits" value="2 hits in 64 CRISPR screens"/>
</dbReference>
<dbReference type="ChiTaRS" id="Abcd1">
    <property type="organism name" value="mouse"/>
</dbReference>
<dbReference type="PRO" id="PR:P48410"/>
<dbReference type="Proteomes" id="UP000000589">
    <property type="component" value="Chromosome X"/>
</dbReference>
<dbReference type="RNAct" id="P48410">
    <property type="molecule type" value="protein"/>
</dbReference>
<dbReference type="Bgee" id="ENSMUSG00000031378">
    <property type="expression patterns" value="Expressed in small intestine Peyer's patch and 255 other cell types or tissues"/>
</dbReference>
<dbReference type="ExpressionAtlas" id="P48410">
    <property type="expression patterns" value="baseline and differential"/>
</dbReference>
<dbReference type="GO" id="GO:0005789">
    <property type="term" value="C:endoplasmic reticulum membrane"/>
    <property type="evidence" value="ECO:0000250"/>
    <property type="project" value="UniProtKB"/>
</dbReference>
<dbReference type="GO" id="GO:0005765">
    <property type="term" value="C:lysosomal membrane"/>
    <property type="evidence" value="ECO:0000250"/>
    <property type="project" value="UniProtKB"/>
</dbReference>
<dbReference type="GO" id="GO:0031966">
    <property type="term" value="C:mitochondrial membrane"/>
    <property type="evidence" value="ECO:0000250"/>
    <property type="project" value="UniProtKB"/>
</dbReference>
<dbReference type="GO" id="GO:0005739">
    <property type="term" value="C:mitochondrion"/>
    <property type="evidence" value="ECO:0007005"/>
    <property type="project" value="MGI"/>
</dbReference>
<dbReference type="GO" id="GO:0048471">
    <property type="term" value="C:perinuclear region of cytoplasm"/>
    <property type="evidence" value="ECO:0007669"/>
    <property type="project" value="Ensembl"/>
</dbReference>
<dbReference type="GO" id="GO:0005778">
    <property type="term" value="C:peroxisomal membrane"/>
    <property type="evidence" value="ECO:0000314"/>
    <property type="project" value="HGNC-UCL"/>
</dbReference>
<dbReference type="GO" id="GO:0015607">
    <property type="term" value="F:ABC-type fatty-acyl-CoA transporter activity"/>
    <property type="evidence" value="ECO:0000250"/>
    <property type="project" value="UniProtKB"/>
</dbReference>
<dbReference type="GO" id="GO:0043531">
    <property type="term" value="F:ADP binding"/>
    <property type="evidence" value="ECO:0000250"/>
    <property type="project" value="UniProtKB"/>
</dbReference>
<dbReference type="GO" id="GO:0042887">
    <property type="term" value="F:amide transmembrane transporter activity"/>
    <property type="evidence" value="ECO:0000316"/>
    <property type="project" value="MGI"/>
</dbReference>
<dbReference type="GO" id="GO:0005524">
    <property type="term" value="F:ATP binding"/>
    <property type="evidence" value="ECO:0000250"/>
    <property type="project" value="UniProtKB"/>
</dbReference>
<dbReference type="GO" id="GO:0016887">
    <property type="term" value="F:ATP hydrolysis activity"/>
    <property type="evidence" value="ECO:0000250"/>
    <property type="project" value="UniProtKB"/>
</dbReference>
<dbReference type="GO" id="GO:0042626">
    <property type="term" value="F:ATPase-coupled transmembrane transporter activity"/>
    <property type="evidence" value="ECO:0000250"/>
    <property type="project" value="UniProtKB"/>
</dbReference>
<dbReference type="GO" id="GO:0019899">
    <property type="term" value="F:enzyme binding"/>
    <property type="evidence" value="ECO:0007669"/>
    <property type="project" value="Ensembl"/>
</dbReference>
<dbReference type="GO" id="GO:0047617">
    <property type="term" value="F:fatty acyl-CoA hydrolase activity"/>
    <property type="evidence" value="ECO:0000250"/>
    <property type="project" value="UniProtKB"/>
</dbReference>
<dbReference type="GO" id="GO:0005324">
    <property type="term" value="F:long-chain fatty acid transmembrane transporter activity"/>
    <property type="evidence" value="ECO:0000316"/>
    <property type="project" value="MGI"/>
</dbReference>
<dbReference type="GO" id="GO:0015932">
    <property type="term" value="F:nucleobase-containing compound transmembrane transporter activity"/>
    <property type="evidence" value="ECO:0000316"/>
    <property type="project" value="MGI"/>
</dbReference>
<dbReference type="GO" id="GO:0015605">
    <property type="term" value="F:organophosphate ester transmembrane transporter activity"/>
    <property type="evidence" value="ECO:0000316"/>
    <property type="project" value="MGI"/>
</dbReference>
<dbReference type="GO" id="GO:0042803">
    <property type="term" value="F:protein homodimerization activity"/>
    <property type="evidence" value="ECO:0007669"/>
    <property type="project" value="Ensembl"/>
</dbReference>
<dbReference type="GO" id="GO:1901682">
    <property type="term" value="F:sulfur compound transmembrane transporter activity"/>
    <property type="evidence" value="ECO:0000316"/>
    <property type="project" value="MGI"/>
</dbReference>
<dbReference type="GO" id="GO:0052817">
    <property type="term" value="F:very long-chain fatty acyl-CoA hydrolase activity"/>
    <property type="evidence" value="ECO:0007669"/>
    <property type="project" value="RHEA"/>
</dbReference>
<dbReference type="GO" id="GO:0036109">
    <property type="term" value="P:alpha-linolenic acid metabolic process"/>
    <property type="evidence" value="ECO:0000316"/>
    <property type="project" value="MGI"/>
</dbReference>
<dbReference type="GO" id="GO:0006635">
    <property type="term" value="P:fatty acid beta-oxidation"/>
    <property type="evidence" value="ECO:0000315"/>
    <property type="project" value="UniProtKB"/>
</dbReference>
<dbReference type="GO" id="GO:0006633">
    <property type="term" value="P:fatty acid biosynthetic process"/>
    <property type="evidence" value="ECO:0000316"/>
    <property type="project" value="MGI"/>
</dbReference>
<dbReference type="GO" id="GO:1901570">
    <property type="term" value="P:fatty acid derivative biosynthetic process"/>
    <property type="evidence" value="ECO:0000316"/>
    <property type="project" value="MGI"/>
</dbReference>
<dbReference type="GO" id="GO:0030497">
    <property type="term" value="P:fatty acid elongation"/>
    <property type="evidence" value="ECO:0000315"/>
    <property type="project" value="UniProtKB"/>
</dbReference>
<dbReference type="GO" id="GO:0055089">
    <property type="term" value="P:fatty acid homeostasis"/>
    <property type="evidence" value="ECO:0000315"/>
    <property type="project" value="UniProtKB"/>
</dbReference>
<dbReference type="GO" id="GO:0043651">
    <property type="term" value="P:linoleic acid metabolic process"/>
    <property type="evidence" value="ECO:0000316"/>
    <property type="project" value="MGI"/>
</dbReference>
<dbReference type="GO" id="GO:0042759">
    <property type="term" value="P:long-chain fatty acid biosynthetic process"/>
    <property type="evidence" value="ECO:0000316"/>
    <property type="project" value="MGI"/>
</dbReference>
<dbReference type="GO" id="GO:0042758">
    <property type="term" value="P:long-chain fatty acid catabolic process"/>
    <property type="evidence" value="ECO:0000250"/>
    <property type="project" value="UniProtKB"/>
</dbReference>
<dbReference type="GO" id="GO:0015910">
    <property type="term" value="P:long-chain fatty acid import into peroxisome"/>
    <property type="evidence" value="ECO:0000250"/>
    <property type="project" value="UniProtKB"/>
</dbReference>
<dbReference type="GO" id="GO:0043217">
    <property type="term" value="P:myelin maintenance"/>
    <property type="evidence" value="ECO:0000315"/>
    <property type="project" value="UniProtKB"/>
</dbReference>
<dbReference type="GO" id="GO:1900016">
    <property type="term" value="P:negative regulation of cytokine production involved in inflammatory response"/>
    <property type="evidence" value="ECO:0000315"/>
    <property type="project" value="UniProtKB"/>
</dbReference>
<dbReference type="GO" id="GO:1903427">
    <property type="term" value="P:negative regulation of reactive oxygen species biosynthetic process"/>
    <property type="evidence" value="ECO:0000315"/>
    <property type="project" value="UniProtKB"/>
</dbReference>
<dbReference type="GO" id="GO:1990535">
    <property type="term" value="P:neuron projection maintenance"/>
    <property type="evidence" value="ECO:0000315"/>
    <property type="project" value="UniProtKB"/>
</dbReference>
<dbReference type="GO" id="GO:0007031">
    <property type="term" value="P:peroxisome organization"/>
    <property type="evidence" value="ECO:0007669"/>
    <property type="project" value="Ensembl"/>
</dbReference>
<dbReference type="GO" id="GO:0032000">
    <property type="term" value="P:positive regulation of fatty acid beta-oxidation"/>
    <property type="evidence" value="ECO:0000315"/>
    <property type="project" value="UniProtKB"/>
</dbReference>
<dbReference type="GO" id="GO:2001280">
    <property type="term" value="P:positive regulation of unsaturated fatty acid biosynthetic process"/>
    <property type="evidence" value="ECO:0000315"/>
    <property type="project" value="UniProtKB"/>
</dbReference>
<dbReference type="GO" id="GO:1900407">
    <property type="term" value="P:regulation of cellular response to oxidative stress"/>
    <property type="evidence" value="ECO:0000315"/>
    <property type="project" value="UniProtKB"/>
</dbReference>
<dbReference type="GO" id="GO:0031998">
    <property type="term" value="P:regulation of fatty acid beta-oxidation"/>
    <property type="evidence" value="ECO:0000315"/>
    <property type="project" value="UniProtKB"/>
</dbReference>
<dbReference type="GO" id="GO:0051900">
    <property type="term" value="P:regulation of mitochondrial depolarization"/>
    <property type="evidence" value="ECO:0000315"/>
    <property type="project" value="UniProtKB"/>
</dbReference>
<dbReference type="GO" id="GO:0002082">
    <property type="term" value="P:regulation of oxidative phosphorylation"/>
    <property type="evidence" value="ECO:0000315"/>
    <property type="project" value="UniProtKB"/>
</dbReference>
<dbReference type="GO" id="GO:0055092">
    <property type="term" value="P:sterol homeostasis"/>
    <property type="evidence" value="ECO:0000315"/>
    <property type="project" value="UniProtKB"/>
</dbReference>
<dbReference type="GO" id="GO:0006636">
    <property type="term" value="P:unsaturated fatty acid biosynthetic process"/>
    <property type="evidence" value="ECO:0000316"/>
    <property type="project" value="MGI"/>
</dbReference>
<dbReference type="GO" id="GO:0042760">
    <property type="term" value="P:very long-chain fatty acid catabolic process"/>
    <property type="evidence" value="ECO:0000315"/>
    <property type="project" value="UniProtKB"/>
</dbReference>
<dbReference type="GO" id="GO:0000038">
    <property type="term" value="P:very long-chain fatty acid metabolic process"/>
    <property type="evidence" value="ECO:0000315"/>
    <property type="project" value="UniProtKB"/>
</dbReference>
<dbReference type="GO" id="GO:0036113">
    <property type="term" value="P:very long-chain fatty-acyl-CoA catabolic process"/>
    <property type="evidence" value="ECO:0000250"/>
    <property type="project" value="UniProtKB"/>
</dbReference>
<dbReference type="CDD" id="cd03223">
    <property type="entry name" value="ABCD_peroxisomal_ALDP"/>
    <property type="match status" value="1"/>
</dbReference>
<dbReference type="FunFam" id="3.40.50.300:FF:000800">
    <property type="entry name" value="ATP-binding cassette sub-family D member 1"/>
    <property type="match status" value="1"/>
</dbReference>
<dbReference type="Gene3D" id="3.40.50.300">
    <property type="entry name" value="P-loop containing nucleotide triphosphate hydrolases"/>
    <property type="match status" value="1"/>
</dbReference>
<dbReference type="InterPro" id="IPR003593">
    <property type="entry name" value="AAA+_ATPase"/>
</dbReference>
<dbReference type="InterPro" id="IPR011527">
    <property type="entry name" value="ABC1_TM_dom"/>
</dbReference>
<dbReference type="InterPro" id="IPR003439">
    <property type="entry name" value="ABC_transporter-like_ATP-bd"/>
</dbReference>
<dbReference type="InterPro" id="IPR017871">
    <property type="entry name" value="ABC_transporter-like_CS"/>
</dbReference>
<dbReference type="InterPro" id="IPR050835">
    <property type="entry name" value="ABC_transporter_sub-D"/>
</dbReference>
<dbReference type="InterPro" id="IPR005283">
    <property type="entry name" value="FA_transporter"/>
</dbReference>
<dbReference type="InterPro" id="IPR027417">
    <property type="entry name" value="P-loop_NTPase"/>
</dbReference>
<dbReference type="NCBIfam" id="TIGR00954">
    <property type="entry name" value="3a01203"/>
    <property type="match status" value="1"/>
</dbReference>
<dbReference type="PANTHER" id="PTHR11384:SF21">
    <property type="entry name" value="ATP-BINDING CASSETTE SUB-FAMILY D MEMBER 1"/>
    <property type="match status" value="1"/>
</dbReference>
<dbReference type="PANTHER" id="PTHR11384">
    <property type="entry name" value="ATP-BINDING CASSETTE, SUB-FAMILY D MEMBER"/>
    <property type="match status" value="1"/>
</dbReference>
<dbReference type="Pfam" id="PF06472">
    <property type="entry name" value="ABC_membrane_2"/>
    <property type="match status" value="1"/>
</dbReference>
<dbReference type="Pfam" id="PF00005">
    <property type="entry name" value="ABC_tran"/>
    <property type="match status" value="1"/>
</dbReference>
<dbReference type="SMART" id="SM00382">
    <property type="entry name" value="AAA"/>
    <property type="match status" value="1"/>
</dbReference>
<dbReference type="SUPFAM" id="SSF52540">
    <property type="entry name" value="P-loop containing nucleoside triphosphate hydrolases"/>
    <property type="match status" value="1"/>
</dbReference>
<dbReference type="PROSITE" id="PS50929">
    <property type="entry name" value="ABC_TM1F"/>
    <property type="match status" value="1"/>
</dbReference>
<dbReference type="PROSITE" id="PS00211">
    <property type="entry name" value="ABC_TRANSPORTER_1"/>
    <property type="match status" value="1"/>
</dbReference>
<dbReference type="PROSITE" id="PS50893">
    <property type="entry name" value="ABC_TRANSPORTER_2"/>
    <property type="match status" value="1"/>
</dbReference>
<keyword id="KW-0067">ATP-binding</keyword>
<keyword id="KW-0256">Endoplasmic reticulum</keyword>
<keyword id="KW-0325">Glycoprotein</keyword>
<keyword id="KW-0378">Hydrolase</keyword>
<keyword id="KW-0458">Lysosome</keyword>
<keyword id="KW-0472">Membrane</keyword>
<keyword id="KW-0496">Mitochondrion</keyword>
<keyword id="KW-0547">Nucleotide-binding</keyword>
<keyword id="KW-0576">Peroxisome</keyword>
<keyword id="KW-1185">Reference proteome</keyword>
<keyword id="KW-1278">Translocase</keyword>
<keyword id="KW-0812">Transmembrane</keyword>
<keyword id="KW-1133">Transmembrane helix</keyword>
<keyword id="KW-0813">Transport</keyword>
<reference key="1">
    <citation type="journal article" date="1994" name="Mamm. Genome">
        <title>cDNA sequence of Aldgh, the mouse homolog of the X-linked adrenoleukodystrophy gene.</title>
        <authorList>
            <person name="Sarde C.-O."/>
            <person name="Thomas J."/>
            <person name="Sadoulet H."/>
            <person name="Garnier J.-M."/>
            <person name="Mandel J.-L."/>
        </authorList>
    </citation>
    <scope>NUCLEOTIDE SEQUENCE [MRNA]</scope>
    <source>
        <tissue>Fibrotic liver</tissue>
    </source>
</reference>
<reference key="2">
    <citation type="journal article" date="2005" name="Science">
        <title>The transcriptional landscape of the mammalian genome.</title>
        <authorList>
            <person name="Carninci P."/>
            <person name="Kasukawa T."/>
            <person name="Katayama S."/>
            <person name="Gough J."/>
            <person name="Frith M.C."/>
            <person name="Maeda N."/>
            <person name="Oyama R."/>
            <person name="Ravasi T."/>
            <person name="Lenhard B."/>
            <person name="Wells C."/>
            <person name="Kodzius R."/>
            <person name="Shimokawa K."/>
            <person name="Bajic V.B."/>
            <person name="Brenner S.E."/>
            <person name="Batalov S."/>
            <person name="Forrest A.R."/>
            <person name="Zavolan M."/>
            <person name="Davis M.J."/>
            <person name="Wilming L.G."/>
            <person name="Aidinis V."/>
            <person name="Allen J.E."/>
            <person name="Ambesi-Impiombato A."/>
            <person name="Apweiler R."/>
            <person name="Aturaliya R.N."/>
            <person name="Bailey T.L."/>
            <person name="Bansal M."/>
            <person name="Baxter L."/>
            <person name="Beisel K.W."/>
            <person name="Bersano T."/>
            <person name="Bono H."/>
            <person name="Chalk A.M."/>
            <person name="Chiu K.P."/>
            <person name="Choudhary V."/>
            <person name="Christoffels A."/>
            <person name="Clutterbuck D.R."/>
            <person name="Crowe M.L."/>
            <person name="Dalla E."/>
            <person name="Dalrymple B.P."/>
            <person name="de Bono B."/>
            <person name="Della Gatta G."/>
            <person name="di Bernardo D."/>
            <person name="Down T."/>
            <person name="Engstrom P."/>
            <person name="Fagiolini M."/>
            <person name="Faulkner G."/>
            <person name="Fletcher C.F."/>
            <person name="Fukushima T."/>
            <person name="Furuno M."/>
            <person name="Futaki S."/>
            <person name="Gariboldi M."/>
            <person name="Georgii-Hemming P."/>
            <person name="Gingeras T.R."/>
            <person name="Gojobori T."/>
            <person name="Green R.E."/>
            <person name="Gustincich S."/>
            <person name="Harbers M."/>
            <person name="Hayashi Y."/>
            <person name="Hensch T.K."/>
            <person name="Hirokawa N."/>
            <person name="Hill D."/>
            <person name="Huminiecki L."/>
            <person name="Iacono M."/>
            <person name="Ikeo K."/>
            <person name="Iwama A."/>
            <person name="Ishikawa T."/>
            <person name="Jakt M."/>
            <person name="Kanapin A."/>
            <person name="Katoh M."/>
            <person name="Kawasawa Y."/>
            <person name="Kelso J."/>
            <person name="Kitamura H."/>
            <person name="Kitano H."/>
            <person name="Kollias G."/>
            <person name="Krishnan S.P."/>
            <person name="Kruger A."/>
            <person name="Kummerfeld S.K."/>
            <person name="Kurochkin I.V."/>
            <person name="Lareau L.F."/>
            <person name="Lazarevic D."/>
            <person name="Lipovich L."/>
            <person name="Liu J."/>
            <person name="Liuni S."/>
            <person name="McWilliam S."/>
            <person name="Madan Babu M."/>
            <person name="Madera M."/>
            <person name="Marchionni L."/>
            <person name="Matsuda H."/>
            <person name="Matsuzawa S."/>
            <person name="Miki H."/>
            <person name="Mignone F."/>
            <person name="Miyake S."/>
            <person name="Morris K."/>
            <person name="Mottagui-Tabar S."/>
            <person name="Mulder N."/>
            <person name="Nakano N."/>
            <person name="Nakauchi H."/>
            <person name="Ng P."/>
            <person name="Nilsson R."/>
            <person name="Nishiguchi S."/>
            <person name="Nishikawa S."/>
            <person name="Nori F."/>
            <person name="Ohara O."/>
            <person name="Okazaki Y."/>
            <person name="Orlando V."/>
            <person name="Pang K.C."/>
            <person name="Pavan W.J."/>
            <person name="Pavesi G."/>
            <person name="Pesole G."/>
            <person name="Petrovsky N."/>
            <person name="Piazza S."/>
            <person name="Reed J."/>
            <person name="Reid J.F."/>
            <person name="Ring B.Z."/>
            <person name="Ringwald M."/>
            <person name="Rost B."/>
            <person name="Ruan Y."/>
            <person name="Salzberg S.L."/>
            <person name="Sandelin A."/>
            <person name="Schneider C."/>
            <person name="Schoenbach C."/>
            <person name="Sekiguchi K."/>
            <person name="Semple C.A."/>
            <person name="Seno S."/>
            <person name="Sessa L."/>
            <person name="Sheng Y."/>
            <person name="Shibata Y."/>
            <person name="Shimada H."/>
            <person name="Shimada K."/>
            <person name="Silva D."/>
            <person name="Sinclair B."/>
            <person name="Sperling S."/>
            <person name="Stupka E."/>
            <person name="Sugiura K."/>
            <person name="Sultana R."/>
            <person name="Takenaka Y."/>
            <person name="Taki K."/>
            <person name="Tammoja K."/>
            <person name="Tan S.L."/>
            <person name="Tang S."/>
            <person name="Taylor M.S."/>
            <person name="Tegner J."/>
            <person name="Teichmann S.A."/>
            <person name="Ueda H.R."/>
            <person name="van Nimwegen E."/>
            <person name="Verardo R."/>
            <person name="Wei C.L."/>
            <person name="Yagi K."/>
            <person name="Yamanishi H."/>
            <person name="Zabarovsky E."/>
            <person name="Zhu S."/>
            <person name="Zimmer A."/>
            <person name="Hide W."/>
            <person name="Bult C."/>
            <person name="Grimmond S.M."/>
            <person name="Teasdale R.D."/>
            <person name="Liu E.T."/>
            <person name="Brusic V."/>
            <person name="Quackenbush J."/>
            <person name="Wahlestedt C."/>
            <person name="Mattick J.S."/>
            <person name="Hume D.A."/>
            <person name="Kai C."/>
            <person name="Sasaki D."/>
            <person name="Tomaru Y."/>
            <person name="Fukuda S."/>
            <person name="Kanamori-Katayama M."/>
            <person name="Suzuki M."/>
            <person name="Aoki J."/>
            <person name="Arakawa T."/>
            <person name="Iida J."/>
            <person name="Imamura K."/>
            <person name="Itoh M."/>
            <person name="Kato T."/>
            <person name="Kawaji H."/>
            <person name="Kawagashira N."/>
            <person name="Kawashima T."/>
            <person name="Kojima M."/>
            <person name="Kondo S."/>
            <person name="Konno H."/>
            <person name="Nakano K."/>
            <person name="Ninomiya N."/>
            <person name="Nishio T."/>
            <person name="Okada M."/>
            <person name="Plessy C."/>
            <person name="Shibata K."/>
            <person name="Shiraki T."/>
            <person name="Suzuki S."/>
            <person name="Tagami M."/>
            <person name="Waki K."/>
            <person name="Watahiki A."/>
            <person name="Okamura-Oho Y."/>
            <person name="Suzuki H."/>
            <person name="Kawai J."/>
            <person name="Hayashizaki Y."/>
        </authorList>
    </citation>
    <scope>NUCLEOTIDE SEQUENCE [LARGE SCALE MRNA]</scope>
    <source>
        <strain>NOD</strain>
        <tissue>Thymus</tissue>
    </source>
</reference>
<reference key="3">
    <citation type="journal article" date="2004" name="Genome Res.">
        <title>The status, quality, and expansion of the NIH full-length cDNA project: the Mammalian Gene Collection (MGC).</title>
        <authorList>
            <consortium name="The MGC Project Team"/>
        </authorList>
    </citation>
    <scope>NUCLEOTIDE SEQUENCE [LARGE SCALE MRNA]</scope>
    <source>
        <strain>C57BL/6J</strain>
        <strain>FVB/N</strain>
        <tissue>Brain</tissue>
        <tissue>Mammary gland</tissue>
    </source>
</reference>
<reference key="4">
    <citation type="journal article" date="1999" name="Eur. J. Biochem.">
        <title>The four murine peroxisomal ABC-transporter genes differ in constitutive, inducible and developmental expression.</title>
        <authorList>
            <person name="Berger J."/>
            <person name="Albet S."/>
            <person name="Bentejac M."/>
            <person name="Netik A."/>
            <person name="Holzinger A."/>
            <person name="Roscher A."/>
            <person name="Bugaut M."/>
            <person name="Forss-Petter S."/>
        </authorList>
    </citation>
    <scope>NUCLEOTIDE SEQUENCE [GENOMIC DNA] OF 1-33</scope>
    <scope>TISSUE SPECIFICITY</scope>
    <scope>DEVELOPMENTAL STAGE</scope>
    <scope>INDUCTION</scope>
    <source>
        <strain>129/SvJ</strain>
    </source>
</reference>
<reference key="5">
    <citation type="submission" date="1999-03" db="EMBL/GenBank/DDBJ databases">
        <title>Comparative sequence analysis of the mouse L1cam locus and the corresponding region of human Xq28.</title>
        <authorList>
            <person name="Platzer M."/>
            <person name="Brenner V."/>
            <person name="Reichwald K."/>
            <person name="Wiehe T."/>
            <person name="Oksche A."/>
            <person name="Rosenthal A."/>
        </authorList>
    </citation>
    <scope>NUCLEOTIDE SEQUENCE [GENOMIC DNA] OF 362-736</scope>
</reference>
<reference key="6">
    <citation type="journal article" date="2010" name="Cell">
        <title>A tissue-specific atlas of mouse protein phosphorylation and expression.</title>
        <authorList>
            <person name="Huttlin E.L."/>
            <person name="Jedrychowski M.P."/>
            <person name="Elias J.E."/>
            <person name="Goswami T."/>
            <person name="Rad R."/>
            <person name="Beausoleil S.A."/>
            <person name="Villen J."/>
            <person name="Haas W."/>
            <person name="Sowa M.E."/>
            <person name="Gygi S.P."/>
        </authorList>
    </citation>
    <scope>IDENTIFICATION BY MASS SPECTROMETRY [LARGE SCALE ANALYSIS]</scope>
    <source>
        <tissue>Brown adipose tissue</tissue>
        <tissue>Heart</tissue>
        <tissue>Kidney</tissue>
        <tissue>Lung</tissue>
        <tissue>Spleen</tissue>
    </source>
</reference>
<reference key="7">
    <citation type="journal article" date="1997" name="Biochem. Biophys. Res. Commun.">
        <title>Adrenoleukodystrophy protein-deficient mice represent abnormality of very long chain fatty acid metabolism.</title>
        <authorList>
            <person name="Kobayashi T."/>
            <person name="Shinnoh N."/>
            <person name="Kondo A."/>
            <person name="Yamada T."/>
        </authorList>
    </citation>
    <scope>DISRUPTION PHENOTYPE</scope>
    <scope>FUNCTION</scope>
</reference>
<reference key="8">
    <citation type="journal article" date="1997" name="J. Neurosci. Res.">
        <title>Targeted inactivation of the X-linked adrenoleukodystrophy gene in mice.</title>
        <authorList>
            <person name="Forss-Petter S."/>
            <person name="Werner H."/>
            <person name="Berger J."/>
            <person name="Lassmann H."/>
            <person name="Molzer B."/>
            <person name="Schwab M.H."/>
            <person name="Bernheimer H."/>
            <person name="Zimmermann F."/>
            <person name="Nave K.A."/>
        </authorList>
    </citation>
    <scope>DISRUPTION PHENOTYPE</scope>
    <scope>FUNCTION</scope>
    <scope>MISCELLANEOUS</scope>
</reference>
<reference key="9">
    <citation type="journal article" date="1997" name="Proc. Natl. Acad. Sci. U.S.A.">
        <title>A mouse model for X-linked adrenoleukodystrophy.</title>
        <authorList>
            <person name="Lu J.F."/>
            <person name="Lawler A.M."/>
            <person name="Watkins P.A."/>
            <person name="Powers J.M."/>
            <person name="Moser A.B."/>
            <person name="Moser H.W."/>
            <person name="Smith K.D."/>
        </authorList>
    </citation>
    <scope>DISRUPTION PHENOTYPE</scope>
    <scope>FUNCTION</scope>
</reference>
<reference key="10">
    <citation type="journal article" date="2002" name="Hum. Mol. Genet.">
        <title>Late onset neurological phenotype of the X-ALD gene inactivation in mice: a mouse model for adrenomyeloneuropathy.</title>
        <authorList>
            <person name="Pujol A."/>
            <person name="Hindelang C."/>
            <person name="Callizot N."/>
            <person name="Bartsch U."/>
            <person name="Schachner M."/>
            <person name="Mandel J.L."/>
        </authorList>
    </citation>
    <scope>DISRUPTION PHENOTYPE</scope>
    <scope>FUNCTION</scope>
</reference>
<reference key="11">
    <citation type="journal article" date="2004" name="Biochim. Biophys. Acta">
        <title>Mouse liver PMP70 and ALDP: homomeric interactions prevail in vivo.</title>
        <authorList>
            <person name="Guimaraes C.P."/>
            <person name="Domingues P."/>
            <person name="Aubourg P."/>
            <person name="Fouquet F."/>
            <person name="Pujol A."/>
            <person name="Jimenez-Sanchez G."/>
            <person name="Sa-Miranda C."/>
            <person name="Azevedo J.E."/>
        </authorList>
    </citation>
    <scope>SUBUNIT</scope>
</reference>
<reference key="12">
    <citation type="journal article" date="2004" name="Hum. Mol. Genet.">
        <title>Functional overlap between ABCD1 (ALD) and ABCD2 (ALDR) transporters: a therapeutic target for X-adrenoleukodystrophy.</title>
        <authorList>
            <person name="Pujol A."/>
            <person name="Ferrer I."/>
            <person name="Camps C."/>
            <person name="Metzger E."/>
            <person name="Hindelang C."/>
            <person name="Callizot N."/>
            <person name="Ruiz M."/>
            <person name="Pampols T."/>
            <person name="Giros M."/>
            <person name="Mandel J.L."/>
        </authorList>
    </citation>
    <scope>DISRUPTION PHENOTYPE</scope>
    <scope>FUNCTION</scope>
</reference>
<reference key="13">
    <citation type="journal article" date="2008" name="Hum. Mol. Genet.">
        <title>Early oxidative damage underlying neurodegeneration in X-adrenoleukodystrophy.</title>
        <authorList>
            <person name="Fourcade S."/>
            <person name="Lopez-Erauskin J."/>
            <person name="Galino J."/>
            <person name="Duval C."/>
            <person name="Naudi A."/>
            <person name="Jove M."/>
            <person name="Kemp S."/>
            <person name="Villarroya F."/>
            <person name="Ferrer I."/>
            <person name="Pamplona R."/>
            <person name="Portero-Otin M."/>
            <person name="Pujol A."/>
        </authorList>
    </citation>
    <scope>FUNCTION</scope>
</reference>
<reference key="14">
    <citation type="journal article" date="2009" name="J. Lipid Res.">
        <title>Silencing of Abcd1 and Abcd2 genes sensitizes astrocytes for inflammation: implication for X-adrenoleukodystrophy.</title>
        <authorList>
            <person name="Singh J."/>
            <person name="Khan M."/>
            <person name="Singh I."/>
        </authorList>
    </citation>
    <scope>FUNCTION</scope>
</reference>
<reference key="15">
    <citation type="journal article" date="2009" name="Am. J. Physiol.">
        <title>A key role for the peroxisomal ABCD2 transporter in fatty acid homeostasis.</title>
        <authorList>
            <person name="Fourcade S."/>
            <person name="Ruiz M."/>
            <person name="Camps C."/>
            <person name="Schlueter A."/>
            <person name="Houten S.M."/>
            <person name="Mooyer P.A."/>
            <person name="Pampols T."/>
            <person name="Dacremont G."/>
            <person name="Wanders R.J."/>
            <person name="Giros M."/>
            <person name="Pujol A."/>
        </authorList>
    </citation>
    <scope>FUNCTION</scope>
</reference>
<reference key="16">
    <citation type="journal article" date="2012" name="Biol. Pharm. Bull.">
        <title>Very long chain fatty acid beta-oxidation in astrocytes: contribution of the ABCD1-dependent and -independent pathways.</title>
        <authorList>
            <person name="Morita M."/>
            <person name="Shinbo S."/>
            <person name="Asahi A."/>
            <person name="Imanaka T."/>
        </authorList>
    </citation>
    <scope>FUNCTION</scope>
</reference>
<reference key="17">
    <citation type="journal article" date="2012" name="Neuroscience">
        <title>Evidence of oxidative stress in very long chain fatty acid--treated oligodendrocytes and potentialization of ROS production using RNA interference-directed knockdown of ABCD1 and ACOX1 peroxisomal proteins.</title>
        <authorList>
            <person name="Baarine M."/>
            <person name="Andreoletti P."/>
            <person name="Athias A."/>
            <person name="Nury T."/>
            <person name="Zarrouk A."/>
            <person name="Ragot K."/>
            <person name="Vejux A."/>
            <person name="Riedinger J.M."/>
            <person name="Kattan Z."/>
            <person name="Bessede G."/>
            <person name="Trompier D."/>
            <person name="Savary S."/>
            <person name="Cherkaoui-Malki M."/>
            <person name="Lizard G."/>
        </authorList>
    </citation>
    <scope>FUNCTION</scope>
</reference>
<reference key="18">
    <citation type="journal article" date="2013" name="Hum. Mol. Genet.">
        <title>Impaired mitochondrial oxidative phosphorylation in the peroxisomal disease X-linked adrenoleukodystrophy.</title>
        <authorList>
            <person name="Lopez-Erauskin J."/>
            <person name="Galino J."/>
            <person name="Ruiz M."/>
            <person name="Cuezva J.M."/>
            <person name="Fabregat I."/>
            <person name="Cacabelos D."/>
            <person name="Boada J."/>
            <person name="Martinez J."/>
            <person name="Ferrer I."/>
            <person name="Pamplona R."/>
            <person name="Villarroya F."/>
            <person name="Portero-Otin M."/>
            <person name="Fourcade S."/>
            <person name="Pujol A."/>
        </authorList>
    </citation>
    <scope>FUNCTION</scope>
</reference>
<reference key="19">
    <citation type="journal article" date="2014" name="PLoS ONE">
        <title>Abcd2 is a strong modifier of the metabolic impairments in peritoneal macrophages of ABCD1-deficient mice.</title>
        <authorList>
            <person name="Muneer Z."/>
            <person name="Wiesinger C."/>
            <person name="Voigtlaender T."/>
            <person name="Werner H.B."/>
            <person name="Berger J."/>
            <person name="Forss-Petter S."/>
        </authorList>
    </citation>
    <scope>FUNCTION</scope>
</reference>
<reference key="20">
    <citation type="journal article" date="2015" name="Biochim. Biophys. Acta">
        <title>Astrocytes and mitochondria from adrenoleukodystrophy protein (ABCD1)-deficient mice reveal that the adrenoleukodystrophy-associated very long-chain fatty acids target several cellular energy-dependent functions.</title>
        <authorList>
            <person name="Kruska N."/>
            <person name="Schoenfeld P."/>
            <person name="Pujol A."/>
            <person name="Reiser G."/>
        </authorList>
    </citation>
    <scope>FUNCTION</scope>
</reference>
<reference key="21">
    <citation type="journal article" date="2015" name="Metab. Brain Dis.">
        <title>Brain microsomal fatty acid elongation is increased in abcd1-deficient mouse during active myelination phase.</title>
        <authorList>
            <person name="Morita M."/>
            <person name="Kawamichi M."/>
            <person name="Shimura Y."/>
            <person name="Kawaguchi K."/>
            <person name="Watanabe S."/>
            <person name="Imanaka T."/>
        </authorList>
    </citation>
    <scope>FUNCTION</scope>
</reference>
<comment type="function">
    <text evidence="2 7 9 10 11 12 13 14 15 16 17 18 19 20 21">ATP-dependent transporter of the ATP-binding cassette (ABC) family involved in the transport of very long chain fatty acid (VLCFA)-CoA from the cytosol to the peroxisome lumen. Has fatty acyl-CoA thioesterase (ACOT) and ATPase activities. Coupled to the ATP-dependent transporter activity also has a fatty acyl-CoA thioesterase activity (ACOT) and hydrolyzes VLCFA-CoA into VLCFA prior their ATP-dependent transport into peroxisomes, the ACOT activity is essential during this transport process (By similarity). Thus, plays a role in regulation of VLCFAs and energy metabolism namely, in the degradation and biosynthesis of fatty acids by beta-oxidation, mitochondrial function and microsomal fatty acid elongation (PubMed:18854420, PubMed:23123468, PubMed:23604518, PubMed:25255441, PubMed:25583114, PubMed:26108493, PubMed:9126326, PubMed:9256488, PubMed:9418970). Involved in several processes; namely, controls the active myelination phase by negatively regulating the microsomal fatty acid elongation activity and may also play a role in axon and myelin maintenance (PubMed:11875044, PubMed:15489218, PubMed:26108493). Also controls the cellular response to oxidative stress by regulating mitochondrial functions such as mitochondrial oxidative phosphorylation and depolarization (PubMed:18344354, PubMed:22521832, PubMed:23604518, PubMed:25583114). And finally controls the inflammatory response by positively regulating peroxisomal beta-oxidation of VLCFAs (PubMed:18723473).</text>
</comment>
<comment type="catalytic activity">
    <reaction evidence="2">
        <text>a very long-chain fatty acyl-CoA + H2O = a very long-chain fatty acid + CoA + H(+)</text>
        <dbReference type="Rhea" id="RHEA:67072"/>
        <dbReference type="ChEBI" id="CHEBI:15377"/>
        <dbReference type="ChEBI" id="CHEBI:15378"/>
        <dbReference type="ChEBI" id="CHEBI:57287"/>
        <dbReference type="ChEBI" id="CHEBI:58950"/>
        <dbReference type="ChEBI" id="CHEBI:138261"/>
    </reaction>
    <physiologicalReaction direction="left-to-right" evidence="2">
        <dbReference type="Rhea" id="RHEA:67073"/>
    </physiologicalReaction>
</comment>
<comment type="catalytic activity">
    <reaction evidence="2">
        <text>a very long-chain fatty acid(in) + ATP + H2O = a very long-chain fatty acid(out) + ADP + phosphate + H(+)</text>
        <dbReference type="Rhea" id="RHEA:67080"/>
        <dbReference type="ChEBI" id="CHEBI:15377"/>
        <dbReference type="ChEBI" id="CHEBI:15378"/>
        <dbReference type="ChEBI" id="CHEBI:30616"/>
        <dbReference type="ChEBI" id="CHEBI:43474"/>
        <dbReference type="ChEBI" id="CHEBI:58950"/>
        <dbReference type="ChEBI" id="CHEBI:456216"/>
    </reaction>
    <physiologicalReaction direction="left-to-right" evidence="2">
        <dbReference type="Rhea" id="RHEA:67081"/>
    </physiologicalReaction>
</comment>
<comment type="catalytic activity">
    <reaction evidence="2">
        <text>tetracosanoyl-CoA + H2O = tetracosanoate + CoA + H(+)</text>
        <dbReference type="Rhea" id="RHEA:40787"/>
        <dbReference type="ChEBI" id="CHEBI:15377"/>
        <dbReference type="ChEBI" id="CHEBI:15378"/>
        <dbReference type="ChEBI" id="CHEBI:31014"/>
        <dbReference type="ChEBI" id="CHEBI:57287"/>
        <dbReference type="ChEBI" id="CHEBI:65052"/>
    </reaction>
    <physiologicalReaction direction="left-to-right" evidence="2">
        <dbReference type="Rhea" id="RHEA:40788"/>
    </physiologicalReaction>
</comment>
<comment type="catalytic activity">
    <reaction evidence="2">
        <text>tetracosanoate(in) + ATP + H2O = tetracosanoate(out) + ADP + phosphate + H(+)</text>
        <dbReference type="Rhea" id="RHEA:67088"/>
        <dbReference type="ChEBI" id="CHEBI:15377"/>
        <dbReference type="ChEBI" id="CHEBI:15378"/>
        <dbReference type="ChEBI" id="CHEBI:30616"/>
        <dbReference type="ChEBI" id="CHEBI:31014"/>
        <dbReference type="ChEBI" id="CHEBI:43474"/>
        <dbReference type="ChEBI" id="CHEBI:456216"/>
    </reaction>
</comment>
<comment type="catalytic activity">
    <reaction evidence="2">
        <text>hexacosanoyl-CoA + H2O = hexacosanoate + CoA + H(+)</text>
        <dbReference type="Rhea" id="RHEA:40791"/>
        <dbReference type="ChEBI" id="CHEBI:15377"/>
        <dbReference type="ChEBI" id="CHEBI:15378"/>
        <dbReference type="ChEBI" id="CHEBI:31013"/>
        <dbReference type="ChEBI" id="CHEBI:57287"/>
        <dbReference type="ChEBI" id="CHEBI:64868"/>
    </reaction>
    <physiologicalReaction direction="left-to-right" evidence="2">
        <dbReference type="Rhea" id="RHEA:40792"/>
    </physiologicalReaction>
</comment>
<comment type="catalytic activity">
    <reaction evidence="2">
        <text>hexacosanoate(in) + ATP + H2O = hexacosanoate(out) + ADP + phosphate + H(+)</text>
        <dbReference type="Rhea" id="RHEA:67084"/>
        <dbReference type="ChEBI" id="CHEBI:15377"/>
        <dbReference type="ChEBI" id="CHEBI:15378"/>
        <dbReference type="ChEBI" id="CHEBI:30616"/>
        <dbReference type="ChEBI" id="CHEBI:31013"/>
        <dbReference type="ChEBI" id="CHEBI:43474"/>
        <dbReference type="ChEBI" id="CHEBI:456216"/>
    </reaction>
    <physiologicalReaction direction="left-to-right" evidence="2">
        <dbReference type="Rhea" id="RHEA:67085"/>
    </physiologicalReaction>
</comment>
<comment type="catalytic activity">
    <reaction evidence="2">
        <text>docosanoyl-CoA + H2O = docosanoate + CoA + H(+)</text>
        <dbReference type="Rhea" id="RHEA:40783"/>
        <dbReference type="ChEBI" id="CHEBI:15377"/>
        <dbReference type="ChEBI" id="CHEBI:15378"/>
        <dbReference type="ChEBI" id="CHEBI:23858"/>
        <dbReference type="ChEBI" id="CHEBI:57287"/>
        <dbReference type="ChEBI" id="CHEBI:65059"/>
    </reaction>
    <physiologicalReaction direction="left-to-right" evidence="2">
        <dbReference type="Rhea" id="RHEA:40784"/>
    </physiologicalReaction>
</comment>
<comment type="catalytic activity">
    <reaction evidence="2">
        <text>docosanoate(in) + ATP + H2O = docosanoate(out) + ADP + phosphate + H(+)</text>
        <dbReference type="Rhea" id="RHEA:67092"/>
        <dbReference type="ChEBI" id="CHEBI:15377"/>
        <dbReference type="ChEBI" id="CHEBI:15378"/>
        <dbReference type="ChEBI" id="CHEBI:23858"/>
        <dbReference type="ChEBI" id="CHEBI:30616"/>
        <dbReference type="ChEBI" id="CHEBI:43474"/>
        <dbReference type="ChEBI" id="CHEBI:456216"/>
    </reaction>
</comment>
<comment type="subunit">
    <text evidence="1 2 8">Can form homodimers and heterodimers with ABCD2 and ABCD3 (PubMed:15276650). Dimerization is necessary to form an active transporter (By similarity). The minimal functional unit is a homodimer but the major oligomeric form in peroxisomal membrane is a homotetramer. Forms heterotramers with ABCD2 (By similarity). Interacts with PEX19; facilitates ABCD1 insertion into the peroxisome membrane (By similarity).</text>
</comment>
<comment type="interaction">
    <interactant intactId="EBI-81118">
        <id>P48410</id>
    </interactant>
    <interactant intactId="EBI-81045">
        <id>P33897</id>
        <label>ABCD1</label>
    </interactant>
    <organismsDiffer>true</organismsDiffer>
    <experiments>2</experiments>
</comment>
<comment type="subcellular location">
    <subcellularLocation>
        <location evidence="2">Peroxisome membrane</location>
        <topology evidence="3">Multi-pass membrane protein</topology>
    </subcellularLocation>
    <subcellularLocation>
        <location evidence="2">Mitochondrion membrane</location>
        <topology evidence="2">Multi-pass membrane protein</topology>
    </subcellularLocation>
    <subcellularLocation>
        <location evidence="2">Lysosome membrane</location>
        <topology evidence="2">Multi-pass membrane protein</topology>
    </subcellularLocation>
    <subcellularLocation>
        <location evidence="2">Endoplasmic reticulum membrane</location>
        <topology evidence="2">Multi-pass membrane protein</topology>
    </subcellularLocation>
</comment>
<comment type="tissue specificity">
    <text evidence="6">Widely expressed at low levels with higher levels in heart, lung, intestine and spleen than in skeletal muscle, brain, liver and kidney.</text>
</comment>
<comment type="developmental stage">
    <text evidence="6">Most abundant in embryo. Gradually decreases during maturation.</text>
</comment>
<comment type="induction">
    <text evidence="6">By dietary fenofibrate.</text>
</comment>
<comment type="domain">
    <text evidence="2">The NH2-terminal transmembrane domaine (TMD) is involved in the recognition of substrates, and undergoes a conformational change upon ATP binding to the COOH-terminal nucleotide binding domain (NBD).</text>
</comment>
<comment type="PTM">
    <text evidence="1">Tyrosine-phosphorylated.</text>
</comment>
<comment type="disruption phenotype">
    <text evidence="7 9 19 20 21">Abcd1 hemizygous males are viable and apparently healthy and they show no detectable motor defect for at least 4-month-old. Inbreeding homozygous and hemizygous Abcd1-deficient mice show a reduction of fertility. Moreover, among several 6-month-old mice, there is at least one apparently infertile mutant of each sex. The infertile hemizygous male show additionally a severe testicular atrophy (PubMed:9418970). Abcd1 hemizygous mutant male and homozygous mutant mice grow normally, are fer- tile, and appear normal at least up to one year of age (PubMed:9126326). Abcd1 hemizygous mutant male and homozygous mutant mice grow normally, are fer- tile, and appear normal at least up to 6 months of age (PubMed:9256488). At 20 months of age, Abcd1 homozygous mice present an impairment of their locomotor coordination and exploratory abilities (PubMed:11875044, PubMed:15489218). Double Abcd1 and Abcd2 knockout mice exhibit severe impairment of their locomotor coordination and exploratory abilities already at 15 months of age (PubMed:15489218).</text>
</comment>
<comment type="similarity">
    <text evidence="24">Belongs to the ABC transporter superfamily. ABCD family. Peroxisomal fatty acyl CoA transporter (TC 3.A.1.203) subfamily.</text>
</comment>
<organism>
    <name type="scientific">Mus musculus</name>
    <name type="common">Mouse</name>
    <dbReference type="NCBI Taxonomy" id="10090"/>
    <lineage>
        <taxon>Eukaryota</taxon>
        <taxon>Metazoa</taxon>
        <taxon>Chordata</taxon>
        <taxon>Craniata</taxon>
        <taxon>Vertebrata</taxon>
        <taxon>Euteleostomi</taxon>
        <taxon>Mammalia</taxon>
        <taxon>Eutheria</taxon>
        <taxon>Euarchontoglires</taxon>
        <taxon>Glires</taxon>
        <taxon>Rodentia</taxon>
        <taxon>Myomorpha</taxon>
        <taxon>Muroidea</taxon>
        <taxon>Muridae</taxon>
        <taxon>Murinae</taxon>
        <taxon>Mus</taxon>
        <taxon>Mus</taxon>
    </lineage>
</organism>
<sequence length="736" mass="81859">MPVLSTPRPSRVTTLKRTAVVLALTAYGVHKIYPLVRQCLTPARGPQVPAGEPTQEASGATATKAGMNRVFLQRLLALLRLLFPRVLCRETGLLALHSAALVSRTFLSVYVARLDGRLARCIVRKDPRAFSWQLLQWLLIALPATFINSAIRYLEGQLALSFRSRLVAHAYGLYFSQQTYYRVSNMDGRLRNPDQSLTEDVVAFAASVAHLYSNLTKPLLDVAVTSYTLLRAARSRGAGTAWPSAIAGLVVFLTANVLRAFSPKFGELVAEEARRKGELRYMHSRVVANSEEIAFYGGHEVELALLQHSYQDLASQINLILLERLWYVMLEQFLMKYVWSASGLLMVAVPIITATGYAESDSEAMKKAALEMKEEELVSERTEAFTIARNLLTAAADATERIMSSYKEVTELAGYTARVYEMFQVFEDVKHCRFKRTGDLEEAQAGPGVMVQSGVHVEGPLKIQGQVVDVEQGIICENIPIITPTGEVVVASLNIRVEEGMHLLITGPNGCGKSSLFRILGGLWPTYSGVLYKPPPQRMFYIPQRPYMSVGSLRDQVIYPDSAEDMRRKGCSEQQLEAILGIVHLRHILQREGGWEAVCDWKDVLSGGEKQRIGMARMFYHRPKYALLDECTSAVSIDVEGKIFQAAKDAGIALLSITHRPSLWKYHTHLLQFDGEGGWKFEKLDSAARLSLTEEKQRLEQQLAGIPKMQGRLQELRQILGEAAAPVQPLVPGVPT</sequence>
<evidence type="ECO:0000250" key="1">
    <source>
        <dbReference type="UniProtKB" id="D3ZHR2"/>
    </source>
</evidence>
<evidence type="ECO:0000250" key="2">
    <source>
        <dbReference type="UniProtKB" id="P33897"/>
    </source>
</evidence>
<evidence type="ECO:0000255" key="3"/>
<evidence type="ECO:0000255" key="4">
    <source>
        <dbReference type="PROSITE-ProRule" id="PRU00434"/>
    </source>
</evidence>
<evidence type="ECO:0000255" key="5">
    <source>
        <dbReference type="PROSITE-ProRule" id="PRU00441"/>
    </source>
</evidence>
<evidence type="ECO:0000269" key="6">
    <source>
    </source>
</evidence>
<evidence type="ECO:0000269" key="7">
    <source>
    </source>
</evidence>
<evidence type="ECO:0000269" key="8">
    <source>
    </source>
</evidence>
<evidence type="ECO:0000269" key="9">
    <source>
    </source>
</evidence>
<evidence type="ECO:0000269" key="10">
    <source>
    </source>
</evidence>
<evidence type="ECO:0000269" key="11">
    <source>
    </source>
</evidence>
<evidence type="ECO:0000269" key="12">
    <source>
    </source>
</evidence>
<evidence type="ECO:0000269" key="13">
    <source>
    </source>
</evidence>
<evidence type="ECO:0000269" key="14">
    <source>
    </source>
</evidence>
<evidence type="ECO:0000269" key="15">
    <source>
    </source>
</evidence>
<evidence type="ECO:0000269" key="16">
    <source>
    </source>
</evidence>
<evidence type="ECO:0000269" key="17">
    <source>
    </source>
</evidence>
<evidence type="ECO:0000269" key="18">
    <source>
    </source>
</evidence>
<evidence type="ECO:0000269" key="19">
    <source>
    </source>
</evidence>
<evidence type="ECO:0000269" key="20">
    <source>
    </source>
</evidence>
<evidence type="ECO:0000269" key="21">
    <source>
    </source>
</evidence>
<evidence type="ECO:0000303" key="22">
    <source>
    </source>
</evidence>
<evidence type="ECO:0000303" key="23">
    <source>
    </source>
</evidence>
<evidence type="ECO:0000305" key="24"/>
<evidence type="ECO:0000312" key="25">
    <source>
        <dbReference type="MGI" id="MGI:1349215"/>
    </source>
</evidence>